<evidence type="ECO:0000255" key="1"/>
<evidence type="ECO:0000255" key="2">
    <source>
        <dbReference type="PROSITE-ProRule" id="PRU00031"/>
    </source>
</evidence>
<evidence type="ECO:0000255" key="3">
    <source>
        <dbReference type="PROSITE-ProRule" id="PRU00498"/>
    </source>
</evidence>
<evidence type="ECO:0000269" key="4">
    <source>
    </source>
</evidence>
<evidence type="ECO:0000269" key="5">
    <source>
    </source>
</evidence>
<evidence type="ECO:0000303" key="6">
    <source>
    </source>
</evidence>
<evidence type="ECO:0000305" key="7"/>
<evidence type="ECO:0000312" key="8">
    <source>
        <dbReference type="EMBL" id="CAB55816.1"/>
    </source>
</evidence>
<reference evidence="8" key="1">
    <citation type="journal article" date="2002" name="Am. J. Trop. Med. Hyg.">
        <title>Isolation of Ixodes ricinus salivary gland mRNA encoding factors induced during blood feeding.</title>
        <authorList>
            <person name="Leboulle G."/>
            <person name="Rochez C."/>
            <person name="Louahed J."/>
            <person name="Rutti B."/>
            <person name="Brossard M."/>
            <person name="Bollen A."/>
            <person name="Godfroid E."/>
        </authorList>
    </citation>
    <scope>NUCLEOTIDE SEQUENCE [LARGE SCALE MRNA]</scope>
    <scope>TISSUE SPECIFICITY</scope>
    <scope>INDUCTION BY BLOOD FEEDING</scope>
    <source>
        <tissue evidence="8">Salivary gland</tissue>
    </source>
</reference>
<reference evidence="7" key="2">
    <citation type="journal article" date="2009" name="J. Exp. Med.">
        <title>Ir-CPI, a coagulation contact phase inhibitor from the tick Ixodes ricinus, inhibits thrombus formation without impairing hemostasis.</title>
        <authorList>
            <person name="Decrem Y."/>
            <person name="Rath G."/>
            <person name="Blasioli V."/>
            <person name="Cauchie P."/>
            <person name="Robert S."/>
            <person name="Beaufays J."/>
            <person name="Frere J.M."/>
            <person name="Feron O."/>
            <person name="Dogne J.M."/>
            <person name="Dessy C."/>
            <person name="Vanhamme L."/>
            <person name="Godfroid E."/>
        </authorList>
    </citation>
    <scope>FUNCTION</scope>
</reference>
<feature type="signal peptide" evidence="1">
    <location>
        <begin position="1"/>
        <end position="19"/>
    </location>
</feature>
<feature type="chain" id="PRO_5004327789" description="Kunitz-type anticoagulant protein Ir-CPI" evidence="1">
    <location>
        <begin position="20"/>
        <end position="86"/>
    </location>
</feature>
<feature type="domain" description="BPTI/Kunitz inhibitor" evidence="2">
    <location>
        <begin position="31"/>
        <end position="81"/>
    </location>
</feature>
<feature type="glycosylation site" description="N-linked (GlcNAc...) asparagine" evidence="3">
    <location>
        <position position="73"/>
    </location>
</feature>
<feature type="disulfide bond" evidence="2">
    <location>
        <begin position="31"/>
        <end position="81"/>
    </location>
</feature>
<feature type="disulfide bond" evidence="2">
    <location>
        <begin position="40"/>
        <end position="64"/>
    </location>
</feature>
<feature type="disulfide bond" evidence="2">
    <location>
        <begin position="56"/>
        <end position="77"/>
    </location>
</feature>
<comment type="function">
    <text evidence="5">Anticoagulant protein (PubMed:19808248). Increases fibrinolysis time (PubMed:19808248). Inhibits thrombin generation (PubMed:19808248). Inhibits the generation of the active forms of host coagulation factor XII, factor XI and plasma kallikrein (PubMed:19808248).</text>
</comment>
<comment type="subcellular location">
    <subcellularLocation>
        <location evidence="7">Secreted</location>
    </subcellularLocation>
</comment>
<comment type="tissue specificity">
    <text evidence="4">Salivary gland.</text>
</comment>
<comment type="induction">
    <text evidence="4">Induced in salivary gland during blood feeding.</text>
</comment>
<gene>
    <name evidence="7" type="primary">CPI</name>
</gene>
<keyword id="KW-1203">Blood coagulation cascade inhibiting toxin</keyword>
<keyword id="KW-1015">Disulfide bond</keyword>
<keyword id="KW-0325">Glycoprotein</keyword>
<keyword id="KW-1199">Hemostasis impairing toxin</keyword>
<keyword id="KW-0646">Protease inhibitor</keyword>
<keyword id="KW-0964">Secreted</keyword>
<keyword id="KW-0722">Serine protease inhibitor</keyword>
<keyword id="KW-0732">Signal</keyword>
<keyword id="KW-0800">Toxin</keyword>
<accession>Q9GP15</accession>
<sequence length="86" mass="9727">MPFIFVVSFAILACIVVDTANHKGRGRPAKCKLPPDDGPCRARIPSYYFDRKTKTCKEFMYGGCEGNENNFENITTCQEECRAKKV</sequence>
<name>IRCPI_IXORI</name>
<organism evidence="8">
    <name type="scientific">Ixodes ricinus</name>
    <name type="common">Common tick</name>
    <name type="synonym">Acarus ricinus</name>
    <dbReference type="NCBI Taxonomy" id="34613"/>
    <lineage>
        <taxon>Eukaryota</taxon>
        <taxon>Metazoa</taxon>
        <taxon>Ecdysozoa</taxon>
        <taxon>Arthropoda</taxon>
        <taxon>Chelicerata</taxon>
        <taxon>Arachnida</taxon>
        <taxon>Acari</taxon>
        <taxon>Parasitiformes</taxon>
        <taxon>Ixodida</taxon>
        <taxon>Ixodoidea</taxon>
        <taxon>Ixodidae</taxon>
        <taxon>Ixodinae</taxon>
        <taxon>Ixodes</taxon>
    </lineage>
</organism>
<protein>
    <recommendedName>
        <fullName evidence="7">Kunitz-type anticoagulant protein Ir-CPI</fullName>
        <shortName evidence="6">Ir-CPI</shortName>
    </recommendedName>
</protein>
<proteinExistence type="evidence at transcript level"/>
<dbReference type="EMBL" id="AJ269641">
    <property type="protein sequence ID" value="CAB55816.1"/>
    <property type="molecule type" value="mRNA"/>
</dbReference>
<dbReference type="SMR" id="Q9GP15"/>
<dbReference type="GO" id="GO:0005615">
    <property type="term" value="C:extracellular space"/>
    <property type="evidence" value="ECO:0007669"/>
    <property type="project" value="TreeGrafter"/>
</dbReference>
<dbReference type="GO" id="GO:0004867">
    <property type="term" value="F:serine-type endopeptidase inhibitor activity"/>
    <property type="evidence" value="ECO:0007669"/>
    <property type="project" value="UniProtKB-KW"/>
</dbReference>
<dbReference type="GO" id="GO:0090729">
    <property type="term" value="F:toxin activity"/>
    <property type="evidence" value="ECO:0007669"/>
    <property type="project" value="UniProtKB-KW"/>
</dbReference>
<dbReference type="GO" id="GO:0044562">
    <property type="term" value="P:envenomation resulting in negative regulation of voltage-gated potassium channel activity in another organism"/>
    <property type="evidence" value="ECO:0007669"/>
    <property type="project" value="UniProtKB-ARBA"/>
</dbReference>
<dbReference type="FunFam" id="4.10.410.10:FF:000004">
    <property type="entry name" value="Tissue factor pathway inhibitor"/>
    <property type="match status" value="1"/>
</dbReference>
<dbReference type="Gene3D" id="4.10.410.10">
    <property type="entry name" value="Pancreatic trypsin inhibitor Kunitz domain"/>
    <property type="match status" value="1"/>
</dbReference>
<dbReference type="InterPro" id="IPR002223">
    <property type="entry name" value="Kunitz_BPTI"/>
</dbReference>
<dbReference type="InterPro" id="IPR036880">
    <property type="entry name" value="Kunitz_BPTI_sf"/>
</dbReference>
<dbReference type="InterPro" id="IPR020901">
    <property type="entry name" value="Prtase_inh_Kunz-CS"/>
</dbReference>
<dbReference type="InterPro" id="IPR050098">
    <property type="entry name" value="TFPI/VKTCI-like"/>
</dbReference>
<dbReference type="PANTHER" id="PTHR10083:SF374">
    <property type="entry name" value="BPTI_KUNITZ INHIBITOR DOMAIN-CONTAINING PROTEIN"/>
    <property type="match status" value="1"/>
</dbReference>
<dbReference type="PANTHER" id="PTHR10083">
    <property type="entry name" value="KUNITZ-TYPE PROTEASE INHIBITOR-RELATED"/>
    <property type="match status" value="1"/>
</dbReference>
<dbReference type="Pfam" id="PF00014">
    <property type="entry name" value="Kunitz_BPTI"/>
    <property type="match status" value="1"/>
</dbReference>
<dbReference type="PRINTS" id="PR00759">
    <property type="entry name" value="BASICPTASE"/>
</dbReference>
<dbReference type="SMART" id="SM00131">
    <property type="entry name" value="KU"/>
    <property type="match status" value="1"/>
</dbReference>
<dbReference type="SUPFAM" id="SSF57362">
    <property type="entry name" value="BPTI-like"/>
    <property type="match status" value="1"/>
</dbReference>
<dbReference type="PROSITE" id="PS00280">
    <property type="entry name" value="BPTI_KUNITZ_1"/>
    <property type="match status" value="1"/>
</dbReference>
<dbReference type="PROSITE" id="PS50279">
    <property type="entry name" value="BPTI_KUNITZ_2"/>
    <property type="match status" value="1"/>
</dbReference>